<keyword id="KW-0066">ATP synthesis</keyword>
<keyword id="KW-0067">ATP-binding</keyword>
<keyword id="KW-0997">Cell inner membrane</keyword>
<keyword id="KW-1003">Cell membrane</keyword>
<keyword id="KW-0139">CF(1)</keyword>
<keyword id="KW-0375">Hydrogen ion transport</keyword>
<keyword id="KW-0406">Ion transport</keyword>
<keyword id="KW-0472">Membrane</keyword>
<keyword id="KW-0547">Nucleotide-binding</keyword>
<keyword id="KW-1185">Reference proteome</keyword>
<keyword id="KW-1278">Translocase</keyword>
<keyword id="KW-0813">Transport</keyword>
<gene>
    <name evidence="1" type="primary">atpA</name>
    <name type="ordered locus">PSHAa3010</name>
</gene>
<accession>Q3IK48</accession>
<evidence type="ECO:0000255" key="1">
    <source>
        <dbReference type="HAMAP-Rule" id="MF_01346"/>
    </source>
</evidence>
<reference key="1">
    <citation type="journal article" date="2005" name="Genome Res.">
        <title>Coping with cold: the genome of the versatile marine Antarctica bacterium Pseudoalteromonas haloplanktis TAC125.</title>
        <authorList>
            <person name="Medigue C."/>
            <person name="Krin E."/>
            <person name="Pascal G."/>
            <person name="Barbe V."/>
            <person name="Bernsel A."/>
            <person name="Bertin P.N."/>
            <person name="Cheung F."/>
            <person name="Cruveiller S."/>
            <person name="D'Amico S."/>
            <person name="Duilio A."/>
            <person name="Fang G."/>
            <person name="Feller G."/>
            <person name="Ho C."/>
            <person name="Mangenot S."/>
            <person name="Marino G."/>
            <person name="Nilsson J."/>
            <person name="Parrilli E."/>
            <person name="Rocha E.P.C."/>
            <person name="Rouy Z."/>
            <person name="Sekowska A."/>
            <person name="Tutino M.L."/>
            <person name="Vallenet D."/>
            <person name="von Heijne G."/>
            <person name="Danchin A."/>
        </authorList>
    </citation>
    <scope>NUCLEOTIDE SEQUENCE [LARGE SCALE GENOMIC DNA]</scope>
    <source>
        <strain>TAC 125</strain>
    </source>
</reference>
<feature type="chain" id="PRO_0000238326" description="ATP synthase subunit alpha">
    <location>
        <begin position="1"/>
        <end position="513"/>
    </location>
</feature>
<feature type="binding site" evidence="1">
    <location>
        <begin position="169"/>
        <end position="176"/>
    </location>
    <ligand>
        <name>ATP</name>
        <dbReference type="ChEBI" id="CHEBI:30616"/>
    </ligand>
</feature>
<feature type="site" description="Required for activity" evidence="1">
    <location>
        <position position="373"/>
    </location>
</feature>
<comment type="function">
    <text evidence="1">Produces ATP from ADP in the presence of a proton gradient across the membrane. The alpha chain is a regulatory subunit.</text>
</comment>
<comment type="catalytic activity">
    <reaction evidence="1">
        <text>ATP + H2O + 4 H(+)(in) = ADP + phosphate + 5 H(+)(out)</text>
        <dbReference type="Rhea" id="RHEA:57720"/>
        <dbReference type="ChEBI" id="CHEBI:15377"/>
        <dbReference type="ChEBI" id="CHEBI:15378"/>
        <dbReference type="ChEBI" id="CHEBI:30616"/>
        <dbReference type="ChEBI" id="CHEBI:43474"/>
        <dbReference type="ChEBI" id="CHEBI:456216"/>
        <dbReference type="EC" id="7.1.2.2"/>
    </reaction>
</comment>
<comment type="subunit">
    <text evidence="1">F-type ATPases have 2 components, CF(1) - the catalytic core - and CF(0) - the membrane proton channel. CF(1) has five subunits: alpha(3), beta(3), gamma(1), delta(1), epsilon(1). CF(0) has three main subunits: a(1), b(2) and c(9-12). The alpha and beta chains form an alternating ring which encloses part of the gamma chain. CF(1) is attached to CF(0) by a central stalk formed by the gamma and epsilon chains, while a peripheral stalk is formed by the delta and b chains.</text>
</comment>
<comment type="subcellular location">
    <subcellularLocation>
        <location evidence="1">Cell inner membrane</location>
        <topology evidence="1">Peripheral membrane protein</topology>
    </subcellularLocation>
</comment>
<comment type="similarity">
    <text evidence="1">Belongs to the ATPase alpha/beta chains family.</text>
</comment>
<name>ATPA_PSET1</name>
<proteinExistence type="inferred from homology"/>
<sequence length="513" mass="55387">MQLNSTEISDLIKQRIEQFEVVSEARNEGTIVSVTDGIIRIHGLADCMQGEMIELPGNRYAIALNLERDSIGAVVMGPYADLTEGVKVYTTGRILEVPVGPGLLGRVVNTLGAPIDGKGALDNDGFEPVEKIAPGVIERKSVDEPVQTGYKSIDAMIPVGRGQRELIIGDRQTGKTALAIDAIINQKGTGVKCVYVAIGQKASTIANVVRKLEEHGALANTIVVVASASESAALQYLAPFAGCTMGEYFRDRGENALIVYDDLSKQAVAYRQISLLLKRPPGREAYPGDVFYLHSRLLERASRVNAEYVEKFTNGEVKGTTGSLTALPIIETQGGDVSAFVPTNVISITDGQIFLETDLFNSGIRPAVNAGISVSRVGGAAQTKIVKKLGGGIRLALAQYRELAAFSQFASDLDDATRAQLEHGERVTELMKQKQYAPMSVAEMSLSLFAAEKGFLQDIEIAKIMDFEAALLSYANSTYAELVAQINETGNYNAEIEAQLKELLTKFKSTQTW</sequence>
<organism>
    <name type="scientific">Pseudoalteromonas translucida (strain TAC 125)</name>
    <dbReference type="NCBI Taxonomy" id="326442"/>
    <lineage>
        <taxon>Bacteria</taxon>
        <taxon>Pseudomonadati</taxon>
        <taxon>Pseudomonadota</taxon>
        <taxon>Gammaproteobacteria</taxon>
        <taxon>Alteromonadales</taxon>
        <taxon>Pseudoalteromonadaceae</taxon>
        <taxon>Pseudoalteromonas</taxon>
    </lineage>
</organism>
<dbReference type="EC" id="7.1.2.2" evidence="1"/>
<dbReference type="EMBL" id="CR954246">
    <property type="protein sequence ID" value="CAI88039.1"/>
    <property type="molecule type" value="Genomic_DNA"/>
</dbReference>
<dbReference type="SMR" id="Q3IK48"/>
<dbReference type="STRING" id="326442.PSHAa3010"/>
<dbReference type="KEGG" id="pha:PSHAa3010"/>
<dbReference type="PATRIC" id="fig|326442.8.peg.2900"/>
<dbReference type="eggNOG" id="COG0056">
    <property type="taxonomic scope" value="Bacteria"/>
</dbReference>
<dbReference type="HOGENOM" id="CLU_010091_2_1_6"/>
<dbReference type="BioCyc" id="PHAL326442:PSHA_RS14770-MONOMER"/>
<dbReference type="Proteomes" id="UP000006843">
    <property type="component" value="Chromosome I"/>
</dbReference>
<dbReference type="GO" id="GO:0005886">
    <property type="term" value="C:plasma membrane"/>
    <property type="evidence" value="ECO:0007669"/>
    <property type="project" value="UniProtKB-SubCell"/>
</dbReference>
<dbReference type="GO" id="GO:0045259">
    <property type="term" value="C:proton-transporting ATP synthase complex"/>
    <property type="evidence" value="ECO:0007669"/>
    <property type="project" value="UniProtKB-KW"/>
</dbReference>
<dbReference type="GO" id="GO:0043531">
    <property type="term" value="F:ADP binding"/>
    <property type="evidence" value="ECO:0007669"/>
    <property type="project" value="TreeGrafter"/>
</dbReference>
<dbReference type="GO" id="GO:0005524">
    <property type="term" value="F:ATP binding"/>
    <property type="evidence" value="ECO:0007669"/>
    <property type="project" value="UniProtKB-UniRule"/>
</dbReference>
<dbReference type="GO" id="GO:0046933">
    <property type="term" value="F:proton-transporting ATP synthase activity, rotational mechanism"/>
    <property type="evidence" value="ECO:0007669"/>
    <property type="project" value="UniProtKB-UniRule"/>
</dbReference>
<dbReference type="CDD" id="cd18113">
    <property type="entry name" value="ATP-synt_F1_alpha_C"/>
    <property type="match status" value="1"/>
</dbReference>
<dbReference type="CDD" id="cd18116">
    <property type="entry name" value="ATP-synt_F1_alpha_N"/>
    <property type="match status" value="1"/>
</dbReference>
<dbReference type="CDD" id="cd01132">
    <property type="entry name" value="F1-ATPase_alpha_CD"/>
    <property type="match status" value="1"/>
</dbReference>
<dbReference type="FunFam" id="1.20.150.20:FF:000001">
    <property type="entry name" value="ATP synthase subunit alpha"/>
    <property type="match status" value="1"/>
</dbReference>
<dbReference type="FunFam" id="2.40.30.20:FF:000001">
    <property type="entry name" value="ATP synthase subunit alpha"/>
    <property type="match status" value="1"/>
</dbReference>
<dbReference type="FunFam" id="3.40.50.300:FF:000002">
    <property type="entry name" value="ATP synthase subunit alpha"/>
    <property type="match status" value="1"/>
</dbReference>
<dbReference type="Gene3D" id="2.40.30.20">
    <property type="match status" value="1"/>
</dbReference>
<dbReference type="Gene3D" id="1.20.150.20">
    <property type="entry name" value="ATP synthase alpha/beta chain, C-terminal domain"/>
    <property type="match status" value="1"/>
</dbReference>
<dbReference type="Gene3D" id="3.40.50.300">
    <property type="entry name" value="P-loop containing nucleotide triphosphate hydrolases"/>
    <property type="match status" value="1"/>
</dbReference>
<dbReference type="HAMAP" id="MF_01346">
    <property type="entry name" value="ATP_synth_alpha_bact"/>
    <property type="match status" value="1"/>
</dbReference>
<dbReference type="InterPro" id="IPR023366">
    <property type="entry name" value="ATP_synth_asu-like_sf"/>
</dbReference>
<dbReference type="InterPro" id="IPR000793">
    <property type="entry name" value="ATP_synth_asu_C"/>
</dbReference>
<dbReference type="InterPro" id="IPR038376">
    <property type="entry name" value="ATP_synth_asu_C_sf"/>
</dbReference>
<dbReference type="InterPro" id="IPR033732">
    <property type="entry name" value="ATP_synth_F1_a_nt-bd_dom"/>
</dbReference>
<dbReference type="InterPro" id="IPR005294">
    <property type="entry name" value="ATP_synth_F1_asu"/>
</dbReference>
<dbReference type="InterPro" id="IPR020003">
    <property type="entry name" value="ATPase_a/bsu_AS"/>
</dbReference>
<dbReference type="InterPro" id="IPR004100">
    <property type="entry name" value="ATPase_F1/V1/A1_a/bsu_N"/>
</dbReference>
<dbReference type="InterPro" id="IPR036121">
    <property type="entry name" value="ATPase_F1/V1/A1_a/bsu_N_sf"/>
</dbReference>
<dbReference type="InterPro" id="IPR000194">
    <property type="entry name" value="ATPase_F1/V1/A1_a/bsu_nucl-bd"/>
</dbReference>
<dbReference type="InterPro" id="IPR027417">
    <property type="entry name" value="P-loop_NTPase"/>
</dbReference>
<dbReference type="NCBIfam" id="TIGR00962">
    <property type="entry name" value="atpA"/>
    <property type="match status" value="1"/>
</dbReference>
<dbReference type="NCBIfam" id="NF009884">
    <property type="entry name" value="PRK13343.1"/>
    <property type="match status" value="1"/>
</dbReference>
<dbReference type="PANTHER" id="PTHR48082">
    <property type="entry name" value="ATP SYNTHASE SUBUNIT ALPHA, MITOCHONDRIAL"/>
    <property type="match status" value="1"/>
</dbReference>
<dbReference type="PANTHER" id="PTHR48082:SF2">
    <property type="entry name" value="ATP SYNTHASE SUBUNIT ALPHA, MITOCHONDRIAL"/>
    <property type="match status" value="1"/>
</dbReference>
<dbReference type="Pfam" id="PF00006">
    <property type="entry name" value="ATP-synt_ab"/>
    <property type="match status" value="1"/>
</dbReference>
<dbReference type="Pfam" id="PF00306">
    <property type="entry name" value="ATP-synt_ab_C"/>
    <property type="match status" value="1"/>
</dbReference>
<dbReference type="Pfam" id="PF02874">
    <property type="entry name" value="ATP-synt_ab_N"/>
    <property type="match status" value="1"/>
</dbReference>
<dbReference type="SUPFAM" id="SSF47917">
    <property type="entry name" value="C-terminal domain of alpha and beta subunits of F1 ATP synthase"/>
    <property type="match status" value="1"/>
</dbReference>
<dbReference type="SUPFAM" id="SSF50615">
    <property type="entry name" value="N-terminal domain of alpha and beta subunits of F1 ATP synthase"/>
    <property type="match status" value="1"/>
</dbReference>
<dbReference type="SUPFAM" id="SSF52540">
    <property type="entry name" value="P-loop containing nucleoside triphosphate hydrolases"/>
    <property type="match status" value="1"/>
</dbReference>
<dbReference type="PROSITE" id="PS00152">
    <property type="entry name" value="ATPASE_ALPHA_BETA"/>
    <property type="match status" value="1"/>
</dbReference>
<protein>
    <recommendedName>
        <fullName evidence="1">ATP synthase subunit alpha</fullName>
        <ecNumber evidence="1">7.1.2.2</ecNumber>
    </recommendedName>
    <alternativeName>
        <fullName evidence="1">ATP synthase F1 sector subunit alpha</fullName>
    </alternativeName>
    <alternativeName>
        <fullName evidence="1">F-ATPase subunit alpha</fullName>
    </alternativeName>
</protein>